<name>CYC1B_XENLA</name>
<protein>
    <recommendedName>
        <fullName>Cytochrome c, somatic B</fullName>
    </recommendedName>
</protein>
<accession>Q6NTN0</accession>
<feature type="initiator methionine" description="Removed" evidence="1">
    <location>
        <position position="1"/>
    </location>
</feature>
<feature type="chain" id="PRO_0000266016" description="Cytochrome c, somatic B">
    <location>
        <begin position="2"/>
        <end position="105"/>
    </location>
</feature>
<feature type="binding site" description="covalent" evidence="2">
    <location>
        <position position="15"/>
    </location>
    <ligand>
        <name>heme c</name>
        <dbReference type="ChEBI" id="CHEBI:61717"/>
    </ligand>
</feature>
<feature type="binding site" description="covalent" evidence="2">
    <location>
        <position position="18"/>
    </location>
    <ligand>
        <name>heme c</name>
        <dbReference type="ChEBI" id="CHEBI:61717"/>
    </ligand>
</feature>
<feature type="binding site" description="axial binding residue" evidence="2">
    <location>
        <position position="19"/>
    </location>
    <ligand>
        <name>heme c</name>
        <dbReference type="ChEBI" id="CHEBI:61717"/>
    </ligand>
    <ligandPart>
        <name>Fe</name>
        <dbReference type="ChEBI" id="CHEBI:18248"/>
    </ligandPart>
</feature>
<feature type="binding site" description="axial binding residue" evidence="2">
    <location>
        <position position="81"/>
    </location>
    <ligand>
        <name>heme c</name>
        <dbReference type="ChEBI" id="CHEBI:61717"/>
    </ligand>
    <ligandPart>
        <name>Fe</name>
        <dbReference type="ChEBI" id="CHEBI:18248"/>
    </ligandPart>
</feature>
<feature type="modified residue" description="N-acetylglycine" evidence="1">
    <location>
        <position position="2"/>
    </location>
</feature>
<sequence>MGDAGKGKKIFIQKCAQCHTVEKTGKHKTGPNLWGLFGRKTGQAPGFSYTDANKSKGIVWGEETLLEYLENPKKYIPGTKMIFAGIKKKNERLDLIAYLKKSTSE</sequence>
<dbReference type="EMBL" id="BC068929">
    <property type="protein sequence ID" value="AAH68929.1"/>
    <property type="status" value="ALT_INIT"/>
    <property type="molecule type" value="mRNA"/>
</dbReference>
<dbReference type="SMR" id="Q6NTN0"/>
<dbReference type="GeneID" id="414705"/>
<dbReference type="KEGG" id="xla:414705"/>
<dbReference type="AGR" id="Xenbase:XB-GENE-6252130"/>
<dbReference type="CTD" id="414705"/>
<dbReference type="Xenbase" id="XB-GENE-6252130">
    <property type="gene designation" value="cyct.L"/>
</dbReference>
<dbReference type="OMA" id="ARCKACH"/>
<dbReference type="OrthoDB" id="9854531at2759"/>
<dbReference type="Proteomes" id="UP000186698">
    <property type="component" value="Chromosome 9_10L"/>
</dbReference>
<dbReference type="Bgee" id="414705">
    <property type="expression patterns" value="Expressed in heart and 17 other cell types or tissues"/>
</dbReference>
<dbReference type="GO" id="GO:0005758">
    <property type="term" value="C:mitochondrial intermembrane space"/>
    <property type="evidence" value="ECO:0000318"/>
    <property type="project" value="GO_Central"/>
</dbReference>
<dbReference type="GO" id="GO:0009055">
    <property type="term" value="F:electron transfer activity"/>
    <property type="evidence" value="ECO:0000318"/>
    <property type="project" value="GO_Central"/>
</dbReference>
<dbReference type="GO" id="GO:0020037">
    <property type="term" value="F:heme binding"/>
    <property type="evidence" value="ECO:0007669"/>
    <property type="project" value="InterPro"/>
</dbReference>
<dbReference type="GO" id="GO:0046872">
    <property type="term" value="F:metal ion binding"/>
    <property type="evidence" value="ECO:0007669"/>
    <property type="project" value="UniProtKB-KW"/>
</dbReference>
<dbReference type="GO" id="GO:0006123">
    <property type="term" value="P:mitochondrial electron transport, cytochrome c to oxygen"/>
    <property type="evidence" value="ECO:0000318"/>
    <property type="project" value="GO_Central"/>
</dbReference>
<dbReference type="GO" id="GO:0006122">
    <property type="term" value="P:mitochondrial electron transport, ubiquinol to cytochrome c"/>
    <property type="evidence" value="ECO:0000318"/>
    <property type="project" value="GO_Central"/>
</dbReference>
<dbReference type="FunFam" id="1.10.760.10:FF:000001">
    <property type="entry name" value="Cytochrome c iso-1"/>
    <property type="match status" value="1"/>
</dbReference>
<dbReference type="Gene3D" id="1.10.760.10">
    <property type="entry name" value="Cytochrome c-like domain"/>
    <property type="match status" value="1"/>
</dbReference>
<dbReference type="InterPro" id="IPR009056">
    <property type="entry name" value="Cyt_c-like_dom"/>
</dbReference>
<dbReference type="InterPro" id="IPR036909">
    <property type="entry name" value="Cyt_c-like_dom_sf"/>
</dbReference>
<dbReference type="InterPro" id="IPR002327">
    <property type="entry name" value="Cyt_c_1A/1B"/>
</dbReference>
<dbReference type="PANTHER" id="PTHR11961">
    <property type="entry name" value="CYTOCHROME C"/>
    <property type="match status" value="1"/>
</dbReference>
<dbReference type="Pfam" id="PF00034">
    <property type="entry name" value="Cytochrom_C"/>
    <property type="match status" value="1"/>
</dbReference>
<dbReference type="PRINTS" id="PR00604">
    <property type="entry name" value="CYTCHRMECIAB"/>
</dbReference>
<dbReference type="SUPFAM" id="SSF46626">
    <property type="entry name" value="Cytochrome c"/>
    <property type="match status" value="1"/>
</dbReference>
<dbReference type="PROSITE" id="PS51007">
    <property type="entry name" value="CYTC"/>
    <property type="match status" value="1"/>
</dbReference>
<gene>
    <name type="primary">cycs-b</name>
</gene>
<evidence type="ECO:0000250" key="1"/>
<evidence type="ECO:0000255" key="2">
    <source>
        <dbReference type="PROSITE-ProRule" id="PRU00433"/>
    </source>
</evidence>
<evidence type="ECO:0000305" key="3"/>
<proteinExistence type="inferred from homology"/>
<keyword id="KW-0007">Acetylation</keyword>
<keyword id="KW-0249">Electron transport</keyword>
<keyword id="KW-0349">Heme</keyword>
<keyword id="KW-0408">Iron</keyword>
<keyword id="KW-0479">Metal-binding</keyword>
<keyword id="KW-0496">Mitochondrion</keyword>
<keyword id="KW-1185">Reference proteome</keyword>
<keyword id="KW-0679">Respiratory chain</keyword>
<keyword id="KW-0813">Transport</keyword>
<comment type="function">
    <text evidence="1">Electron carrier protein. The oxidized form of the cytochrome c heme group can accept an electron from the heme group of the cytochrome c1 subunit of cytochrome reductase. Cytochrome c then transfers this electron to the cytochrome oxidase complex, the final protein carrier in the mitochondrial electron-transport chain (By similarity).</text>
</comment>
<comment type="subcellular location">
    <subcellularLocation>
        <location evidence="1">Mitochondrion intermembrane space</location>
    </subcellularLocation>
    <text evidence="1">Loosely associated with the inner membrane.</text>
</comment>
<comment type="PTM">
    <text evidence="1">Binds 1 heme c group covalently per subunit.</text>
</comment>
<comment type="similarity">
    <text evidence="3">Belongs to the cytochrome c family.</text>
</comment>
<comment type="sequence caution" evidence="3">
    <conflict type="erroneous initiation">
        <sequence resource="EMBL-CDS" id="AAH68929"/>
    </conflict>
</comment>
<comment type="online information" name="Protein Spotlight">
    <link uri="https://www.proteinspotlight.org/back_issues/076"/>
    <text>Life shuttle - Issue 76 of November 2006</text>
</comment>
<organism>
    <name type="scientific">Xenopus laevis</name>
    <name type="common">African clawed frog</name>
    <dbReference type="NCBI Taxonomy" id="8355"/>
    <lineage>
        <taxon>Eukaryota</taxon>
        <taxon>Metazoa</taxon>
        <taxon>Chordata</taxon>
        <taxon>Craniata</taxon>
        <taxon>Vertebrata</taxon>
        <taxon>Euteleostomi</taxon>
        <taxon>Amphibia</taxon>
        <taxon>Batrachia</taxon>
        <taxon>Anura</taxon>
        <taxon>Pipoidea</taxon>
        <taxon>Pipidae</taxon>
        <taxon>Xenopodinae</taxon>
        <taxon>Xenopus</taxon>
        <taxon>Xenopus</taxon>
    </lineage>
</organism>
<reference key="1">
    <citation type="submission" date="2004-04" db="EMBL/GenBank/DDBJ databases">
        <authorList>
            <consortium name="NIH - Xenopus Gene Collection (XGC) project"/>
        </authorList>
    </citation>
    <scope>NUCLEOTIDE SEQUENCE [LARGE SCALE MRNA]</scope>
    <source>
        <tissue>Embryo</tissue>
    </source>
</reference>